<proteinExistence type="evidence at protein level"/>
<sequence length="1284" mass="144605">MHKKRVEEGEASDFSLAWDSSVTAAGGLEGEPECDQKTSRALEDRNSVTSQEERNEDDEDMEDESIYTCDHCQQDFESLADLTDHRAHRCPGDGDDDPQLSWVASSPSSKDVASPTQMIGDGCDLGLGEEEGGTGLPYPCQFCDKSFIRLSYLKRHEQIHSDKLPFKCTYCSRLFKHKRSRDRHIKLHTGDKKYHCHECEAAFSRSDHLKIHLKTHSSSKPFKCTVCKRGFSSTSSLQSHMQAHKKNKEHLAKSEKEAKKDDFMCDYCEDTFSQTEELEKHVLTRHPQLSEKADLQCIHCPEVFVDENTLLAHIHQAHANQKHKCPMCPEQFSSVEGVYCHLDSHRQPDSSNHSVSPDPVLGSVASMSSATPDSSASVERGSTPDSTLKPLRGQKKMRDDGQGWTKVVYSCPYCSKRDFNSLAVLEIHLKTIHADKPQQSHTCQICLDSMPTLYNLNEHVRKLHKNHAYPVMQFGNISAFHCNYCPEMFADINSLQEHIRVSHCGPNANPSDGNNAFFCNQCSMGFLTESSLTEHIQQAHCSVGSAKLESPVVQPTQSFMEVYSCPYCTNSPIFGSILKLTKHIKENHKNIPLAHSKKSKAEQSPVSSDVEVSSPKRQRLSASANSISNGEYPCNQCDLKFSNFESFQTHLKLHLELLLRKQACPQCKEDFDSQESLLQHLTVHYMTTSTHYVCESCDKQFSSVDDLQKHLLDMHTFVLYHCTLCQEVFDSKVSIQVHLAVKHSNEKKMYRCTACNWDFRKEADLQVHVKHSHLGNPAKAHKCIFCGETFSTEVELQCHITTHSKKYNCKFCSKAFHAIILLEKHLREKHCVFDAATENGTANGVPPMATKKAEPADLQGMLLKNPEAPNSHEASEDDVDASEPMYGCDICGAAYTMEVLLQNHRLRDHNIRPGEDDGSRKKAEFIKGSHKCNVCSRTFFSENGLREHLQTHRGPAKHYMCPICGERFPSLLTLTEHKVTHSKSLDTGTCRICKMPLQSEEEFIEHCQMHPDLRNSLTGFRCVVCMQTVTSTLELKIHGTFHMQKLAGSSAASSPNGQGLQKLYKCALCLKEFRSKQDLVKLDVNGLPYGLCAGCMARSANGQVGGLAPPEPADRPCAGLRCPECSVKFESAEDLESHMQVDHRDLTPETSGPRKGTQTSPVPRKKTYQCIKCQMTFENEREIQIHVANHMIEEGINHECKLCNQMFDSPAKLLCHLIEHSFEGMGGTFKCPVCFTVFVQANKLQQHIFAVHGQEDKIYDCSQCPQKFFFQTELQNHTMSQHAQ</sequence>
<reference key="1">
    <citation type="journal article" date="2004" name="Genome Res.">
        <title>The status, quality, and expansion of the NIH full-length cDNA project: the Mammalian Gene Collection (MGC).</title>
        <authorList>
            <consortium name="The MGC Project Team"/>
        </authorList>
    </citation>
    <scope>NUCLEOTIDE SEQUENCE [LARGE SCALE MRNA] (ISOFORM 1)</scope>
</reference>
<reference key="2">
    <citation type="journal article" date="2000" name="Cell">
        <title>OAZ uses distinct DNA- and protein-binding zinc fingers in separate BMP-Smad and Olf signaling pathways.</title>
        <authorList>
            <person name="Hata A."/>
            <person name="Seoane J."/>
            <person name="Lagna G."/>
            <person name="Montalvo E."/>
            <person name="Hemmati-Brivanlou A."/>
            <person name="Massague J."/>
        </authorList>
    </citation>
    <scope>NUCLEOTIDE SEQUENCE [MRNA] OF 61-1284</scope>
    <scope>FUNCTION</scope>
    <scope>DNA-BINDING</scope>
    <scope>SUBCELLULAR LOCATION</scope>
    <scope>DOMAIN</scope>
    <scope>TISSUE SPECIFICITY</scope>
    <scope>INTERACTION WITH SMAD1 AND SMAD4</scope>
    <scope>MUTAGENESIS OF ASN-420; GLU-426; THR-452; GLU-458; ASP-491; GLU-497; THR-528; GLU-534; PHE-574 AND THR-581</scope>
</reference>
<reference key="3">
    <citation type="journal article" date="1998" name="DNA Res.">
        <title>Prediction of the coding sequences of unidentified human genes. XI. The complete sequences of 100 new cDNA clones from brain which code for large proteins in vitro.</title>
        <authorList>
            <person name="Nagase T."/>
            <person name="Ishikawa K."/>
            <person name="Suyama M."/>
            <person name="Kikuno R."/>
            <person name="Miyajima N."/>
            <person name="Tanaka A."/>
            <person name="Kotani H."/>
            <person name="Nomura N."/>
            <person name="Ohara O."/>
        </authorList>
    </citation>
    <scope>NUCLEOTIDE SEQUENCE [LARGE SCALE MRNA] OF 61-1284</scope>
    <source>
        <tissue>Brain</tissue>
    </source>
</reference>
<reference key="4">
    <citation type="journal article" date="2002" name="DNA Res.">
        <title>Construction of expression-ready cDNA clones for KIAA genes: manual curation of 330 KIAA cDNA clones.</title>
        <authorList>
            <person name="Nakajima D."/>
            <person name="Okazaki N."/>
            <person name="Yamakawa H."/>
            <person name="Kikuno R."/>
            <person name="Ohara O."/>
            <person name="Nagase T."/>
        </authorList>
    </citation>
    <scope>SEQUENCE REVISION</scope>
</reference>
<reference key="5">
    <citation type="journal article" date="2011" name="Sci. Signal.">
        <title>System-wide temporal characterization of the proteome and phosphoproteome of human embryonic stem cell differentiation.</title>
        <authorList>
            <person name="Rigbolt K.T."/>
            <person name="Prokhorova T.A."/>
            <person name="Akimov V."/>
            <person name="Henningsen J."/>
            <person name="Johansen P.T."/>
            <person name="Kratchmarova I."/>
            <person name="Kassem M."/>
            <person name="Mann M."/>
            <person name="Olsen J.V."/>
            <person name="Blagoev B."/>
        </authorList>
    </citation>
    <scope>PHOSPHORYLATION [LARGE SCALE ANALYSIS] AT SER-47; SER-50; SER-604 AND SER-1054</scope>
    <scope>IDENTIFICATION BY MASS SPECTROMETRY [LARGE SCALE ANALYSIS]</scope>
</reference>
<reference key="6">
    <citation type="journal article" date="2012" name="Cell">
        <title>Exome capture reveals ZNF423 and CEP164 mutations, linking renal ciliopathies to DNA damage response signaling.</title>
        <authorList>
            <person name="Chaki M."/>
            <person name="Airik R."/>
            <person name="Ghosh A.K."/>
            <person name="Giles R.H."/>
            <person name="Chen R."/>
            <person name="Slaats G.G."/>
            <person name="Wang H."/>
            <person name="Hurd T.W."/>
            <person name="Zhou W."/>
            <person name="Cluckey A."/>
            <person name="Gee H.Y."/>
            <person name="Ramaswami G."/>
            <person name="Hong C.J."/>
            <person name="Hamilton B.A."/>
            <person name="Cervenka I."/>
            <person name="Ganji R.S."/>
            <person name="Bryja V."/>
            <person name="Arts H.H."/>
            <person name="van Reeuwijk J."/>
            <person name="Oud M.M."/>
            <person name="Letteboer S.J."/>
            <person name="Roepman R."/>
            <person name="Husson H."/>
            <person name="Ibraghimov-Beskrovnaya O."/>
            <person name="Yasunaga T."/>
            <person name="Walz G."/>
            <person name="Eley L."/>
            <person name="Sayer J.A."/>
            <person name="Schermer B."/>
            <person name="Liebau M.C."/>
            <person name="Benzing T."/>
            <person name="Le Corre S."/>
            <person name="Drummond I."/>
            <person name="Janssen S."/>
            <person name="Allen S.J."/>
            <person name="Natarajan S."/>
            <person name="O'Toole J.F."/>
            <person name="Attanasio M."/>
            <person name="Saunier S."/>
            <person name="Antignac C."/>
            <person name="Koenekoop R.K."/>
            <person name="Ren H."/>
            <person name="Lopez I."/>
            <person name="Nayir A."/>
            <person name="Stoetzel C."/>
            <person name="Dollfus H."/>
            <person name="Massoudi R."/>
            <person name="Gleeson J.G."/>
            <person name="Andreoli S.P."/>
            <person name="Doherty D.G."/>
            <person name="Lindstrad A."/>
            <person name="Golzio C."/>
            <person name="Katsanis N."/>
            <person name="Pape L."/>
            <person name="Abboud E.B."/>
            <person name="Al-Rajhi A.A."/>
            <person name="Lewis R.A."/>
            <person name="Omran H."/>
            <person name="Lee E.Y."/>
            <person name="Wang S."/>
            <person name="Sekiguchi J.M."/>
            <person name="Saunders R."/>
            <person name="Johnson C.A."/>
            <person name="Garner E."/>
            <person name="Vanselow K."/>
            <person name="Andersen J.S."/>
            <person name="Shlomai J."/>
            <person name="Nurnberg G."/>
            <person name="Nurnberg P."/>
            <person name="Levy S."/>
            <person name="Smogorzewska A."/>
            <person name="Otto E.A."/>
            <person name="Hildebrandt F."/>
        </authorList>
    </citation>
    <scope>INTERACTION WITH PARP1 AND CEP290</scope>
    <scope>VARIANT NPHP14 LEU-913</scope>
    <scope>VARIANT JBTS19 TYR-1277</scope>
</reference>
<evidence type="ECO:0000250" key="1"/>
<evidence type="ECO:0000255" key="2">
    <source>
        <dbReference type="PROSITE-ProRule" id="PRU00042"/>
    </source>
</evidence>
<evidence type="ECO:0000256" key="3">
    <source>
        <dbReference type="SAM" id="MobiDB-lite"/>
    </source>
</evidence>
<evidence type="ECO:0000269" key="4">
    <source>
    </source>
</evidence>
<evidence type="ECO:0000269" key="5">
    <source>
    </source>
</evidence>
<evidence type="ECO:0000305" key="6"/>
<evidence type="ECO:0007744" key="7">
    <source>
    </source>
</evidence>
<evidence type="ECO:0007829" key="8">
    <source>
        <dbReference type="PDB" id="2MDG"/>
    </source>
</evidence>
<protein>
    <recommendedName>
        <fullName>Zinc finger protein 423</fullName>
    </recommendedName>
    <alternativeName>
        <fullName>Olf1/EBF-associated zinc finger protein</fullName>
        <shortName>hOAZ</shortName>
    </alternativeName>
    <alternativeName>
        <fullName>Smad- and Olf-interacting zinc finger protein</fullName>
    </alternativeName>
</protein>
<comment type="function">
    <text evidence="4">Transcription factor that can both act as an activator or a repressor depending on the context. Plays a central role in BMP signaling and olfactory neurogenesis. Associates with SMADs in response to BMP2 leading to activate transcription of BMP target genes. Acts as a transcriptional repressor via its interaction with EBF1, a transcription factor involved in terminal olfactory receptor neurons differentiation; this interaction preventing EBF1 to bind DNA and activate olfactory-specific genes. Involved in olfactory neurogenesis by participating in a developmental switch that regulates the transition from differentiation to maturation in olfactory receptor neurons. Controls proliferation and differentiation of neural precursors in cerebellar vermis formation.</text>
</comment>
<comment type="subunit">
    <text evidence="1 4 5">Homodimer (By similarity). Interacts with EBF1 (By similarity). Interacts with SMAD1 and SMAD4. Interacts with PARP1. Interacts with CEP290.</text>
</comment>
<comment type="interaction">
    <interactant intactId="EBI-950016">
        <id>Q2M1K9</id>
    </interactant>
    <interactant intactId="EBI-1811944">
        <id>O15078</id>
        <label>CEP290</label>
    </interactant>
    <organismsDiffer>false</organismsDiffer>
    <experiments>3</experiments>
</comment>
<comment type="interaction">
    <interactant intactId="EBI-950016">
        <id>Q2M1K9</id>
    </interactant>
    <interactant intactId="EBI-355676">
        <id>P09874</id>
        <label>PARP1</label>
    </interactant>
    <organismsDiffer>false</organismsDiffer>
    <experiments>2</experiments>
</comment>
<comment type="interaction">
    <interactant intactId="EBI-950016">
        <id>Q2M1K9</id>
    </interactant>
    <interactant intactId="EBI-413374">
        <id>P10276</id>
        <label>RARA</label>
    </interactant>
    <organismsDiffer>false</organismsDiffer>
    <experiments>2</experiments>
</comment>
<comment type="subcellular location">
    <subcellularLocation>
        <location evidence="4">Nucleus</location>
    </subcellularLocation>
</comment>
<comment type="alternative products">
    <event type="alternative splicing"/>
    <isoform>
        <id>Q2M1K9-1</id>
        <name>1</name>
        <sequence type="displayed"/>
    </isoform>
    <isoform>
        <id>Q2M1K9-2</id>
        <name>2</name>
        <sequence type="described" ref="VSP_057595"/>
    </isoform>
</comment>
<comment type="tissue specificity">
    <text evidence="4">Expressed in brain, lung, skeletal muscle, heart, pancreas and kidney but not liver or placenta. Also expressed in aorta, ovary, pituitary, small intestine, fetal brain, fetal kidney and, within the adult brain, in the substantia nigra, medulla, amygdala, thalamus and cerebellum.</text>
</comment>
<comment type="domain">
    <text evidence="4">Uses different DNA- and protein-binding zinc fingers to regulate the distinct BMP-Smad and Olf signaling pathways. C2H2-type zinc fingers 14-19 mediate the interaction with SMAD1 and SMAD4, while zinc fingers 28-30 mediate the interaction with EBF1. zinc fingers 2-8 bind the 5'-CCGCCC-3' DNA sequence in concert with EBF1, while zinc fingers 9-13 bind BMP target gene promoters in concert with SMADs.</text>
</comment>
<comment type="disease" evidence="5">
    <disease id="DI-03547">
        <name>Nephronophthisis 14</name>
        <acronym>NPHP14</acronym>
        <description>An autosomal recessive disorder manifesting as infantile-onset kidney disease, cerebellar vermis hypoplasia, and situs inversus. Nephronophthisis is a progressive tubulo-interstitial kidney disorder histologically characterized by modifications of the tubules with thickening of the basement membrane, interstitial fibrosis and, in the advanced stages, medullary cysts.</description>
        <dbReference type="MIM" id="614844"/>
    </disease>
    <text>The disease is caused by variants affecting the gene represented in this entry.</text>
</comment>
<comment type="disease" evidence="5">
    <disease id="DI-03548">
        <name>Joubert syndrome 19</name>
        <acronym>JBTS19</acronym>
        <description>A form of Joubert syndrome, a disorder presenting with cerebellar ataxia, oculomotor apraxia, hypotonia, neonatal breathing abnormalities and psychomotor delay. Neuroradiologically, it is characterized by cerebellar vermian hypoplasia/aplasia, thickened and reoriented superior cerebellar peduncles, and an abnormally large interpeduncular fossa, giving the appearance of a molar tooth on transaxial slices (molar tooth sign). JBTS19 patients have polycystic kidney disease, Leber congenital amaurosis, cerebellar vermis hypoplasia, and breathing abnormality.</description>
        <dbReference type="MIM" id="614844"/>
    </disease>
    <text>The disease is caused by variants affecting the gene represented in this entry.</text>
</comment>
<comment type="similarity">
    <text evidence="6">Belongs to the krueppel C2H2-type zinc-finger protein family.</text>
</comment>
<name>ZN423_HUMAN</name>
<feature type="chain" id="PRO_0000308595" description="Zinc finger protein 423">
    <location>
        <begin position="1"/>
        <end position="1284"/>
    </location>
</feature>
<feature type="zinc finger region" description="C2H2-type 1; degenerate" evidence="2">
    <location>
        <begin position="67"/>
        <end position="93"/>
    </location>
</feature>
<feature type="zinc finger region" description="C2H2-type 2" evidence="2">
    <location>
        <begin position="138"/>
        <end position="160"/>
    </location>
</feature>
<feature type="zinc finger region" description="C2H2-type 3" evidence="2">
    <location>
        <begin position="166"/>
        <end position="188"/>
    </location>
</feature>
<feature type="zinc finger region" description="C2H2-type 4" evidence="2">
    <location>
        <begin position="194"/>
        <end position="216"/>
    </location>
</feature>
<feature type="zinc finger region" description="C2H2-type 5" evidence="2">
    <location>
        <begin position="222"/>
        <end position="244"/>
    </location>
</feature>
<feature type="zinc finger region" description="C2H2-type 6" evidence="2">
    <location>
        <begin position="263"/>
        <end position="286"/>
    </location>
</feature>
<feature type="zinc finger region" description="C2H2-type 7" evidence="2">
    <location>
        <begin position="295"/>
        <end position="318"/>
    </location>
</feature>
<feature type="zinc finger region" description="C2H2-type 8" evidence="2">
    <location>
        <begin position="323"/>
        <end position="345"/>
    </location>
</feature>
<feature type="zinc finger region" description="C2H2-type 9; degenerate" evidence="2">
    <location>
        <begin position="409"/>
        <end position="433"/>
    </location>
</feature>
<feature type="zinc finger region" description="C2H2-type 10" evidence="2">
    <location>
        <begin position="441"/>
        <end position="464"/>
    </location>
</feature>
<feature type="zinc finger region" description="C2H2-type 11" evidence="2">
    <location>
        <begin position="480"/>
        <end position="503"/>
    </location>
</feature>
<feature type="zinc finger region" description="C2H2-type 12" evidence="2">
    <location>
        <begin position="517"/>
        <end position="540"/>
    </location>
</feature>
<feature type="zinc finger region" description="C2H2-type 13; atypical" evidence="2">
    <location>
        <begin position="563"/>
        <end position="588"/>
    </location>
</feature>
<feature type="zinc finger region" description="C2H2-type 14" evidence="2">
    <location>
        <begin position="632"/>
        <end position="654"/>
    </location>
</feature>
<feature type="zinc finger region" description="C2H2-type 15" evidence="2">
    <location>
        <begin position="662"/>
        <end position="684"/>
    </location>
</feature>
<feature type="zinc finger region" description="C2H2-type 16" evidence="2">
    <location>
        <begin position="692"/>
        <end position="715"/>
    </location>
</feature>
<feature type="zinc finger region" description="C2H2-type 17" evidence="2">
    <location>
        <begin position="720"/>
        <end position="743"/>
    </location>
</feature>
<feature type="zinc finger region" description="C2H2-type 18" evidence="2">
    <location>
        <begin position="750"/>
        <end position="773"/>
    </location>
</feature>
<feature type="zinc finger region" description="C2H2-type 19" evidence="2">
    <location>
        <begin position="781"/>
        <end position="803"/>
    </location>
</feature>
<feature type="zinc finger region" description="C2H2-type 20" evidence="2">
    <location>
        <begin position="807"/>
        <end position="830"/>
    </location>
</feature>
<feature type="zinc finger region" description="C2H2-type 21; degenerate" evidence="2">
    <location>
        <begin position="886"/>
        <end position="908"/>
    </location>
</feature>
<feature type="zinc finger region" description="C2H2-type 22" evidence="2">
    <location>
        <begin position="930"/>
        <end position="952"/>
    </location>
</feature>
<feature type="zinc finger region" description="C2H2-type 23" evidence="2">
    <location>
        <begin position="959"/>
        <end position="981"/>
    </location>
</feature>
<feature type="zinc finger region" description="C2H2-type 24" evidence="2">
    <location>
        <begin position="1020"/>
        <end position="1042"/>
    </location>
</feature>
<feature type="zinc finger region" description="C2H2-type 25; degenerate" evidence="2">
    <location>
        <begin position="1064"/>
        <end position="1082"/>
    </location>
</feature>
<feature type="zinc finger region" description="C2H2-type 26" evidence="2">
    <location>
        <begin position="1120"/>
        <end position="1143"/>
    </location>
</feature>
<feature type="zinc finger region" description="C2H2-type 27" evidence="2">
    <location>
        <begin position="1168"/>
        <end position="1190"/>
    </location>
</feature>
<feature type="zinc finger region" description="C2H2-type 28" evidence="2">
    <location>
        <begin position="1198"/>
        <end position="1220"/>
    </location>
</feature>
<feature type="zinc finger region" description="C2H2-type 29" evidence="2">
    <location>
        <begin position="1229"/>
        <end position="1252"/>
    </location>
</feature>
<feature type="zinc finger region" description="C2H2-type 30" evidence="2">
    <location>
        <begin position="1259"/>
        <end position="1282"/>
    </location>
</feature>
<feature type="region of interest" description="Disordered" evidence="3">
    <location>
        <begin position="1"/>
        <end position="64"/>
    </location>
</feature>
<feature type="region of interest" description="Disordered" evidence="3">
    <location>
        <begin position="87"/>
        <end position="117"/>
    </location>
</feature>
<feature type="region of interest" description="Disordered" evidence="3">
    <location>
        <begin position="346"/>
        <end position="398"/>
    </location>
</feature>
<feature type="region of interest" description="Disordered" evidence="3">
    <location>
        <begin position="590"/>
        <end position="624"/>
    </location>
</feature>
<feature type="region of interest" description="Disordered" evidence="3">
    <location>
        <begin position="1136"/>
        <end position="1163"/>
    </location>
</feature>
<feature type="compositionally biased region" description="Basic and acidic residues" evidence="3">
    <location>
        <begin position="34"/>
        <end position="46"/>
    </location>
</feature>
<feature type="compositionally biased region" description="Acidic residues" evidence="3">
    <location>
        <begin position="54"/>
        <end position="64"/>
    </location>
</feature>
<feature type="compositionally biased region" description="Polar residues" evidence="3">
    <location>
        <begin position="102"/>
        <end position="117"/>
    </location>
</feature>
<feature type="compositionally biased region" description="Low complexity" evidence="3">
    <location>
        <begin position="363"/>
        <end position="377"/>
    </location>
</feature>
<feature type="compositionally biased region" description="Low complexity" evidence="3">
    <location>
        <begin position="604"/>
        <end position="615"/>
    </location>
</feature>
<feature type="compositionally biased region" description="Basic and acidic residues" evidence="3">
    <location>
        <begin position="1136"/>
        <end position="1147"/>
    </location>
</feature>
<feature type="modified residue" description="Phosphoserine" evidence="7">
    <location>
        <position position="47"/>
    </location>
</feature>
<feature type="modified residue" description="Phosphoserine" evidence="7">
    <location>
        <position position="50"/>
    </location>
</feature>
<feature type="modified residue" description="Phosphoserine" evidence="7">
    <location>
        <position position="604"/>
    </location>
</feature>
<feature type="modified residue" description="Phosphoserine" evidence="7">
    <location>
        <position position="1054"/>
    </location>
</feature>
<feature type="splice variant" id="VSP_057595" description="In isoform 2.">
    <location>
        <begin position="1"/>
        <end position="60"/>
    </location>
</feature>
<feature type="sequence variant" id="VAR_036844" description="In dbSNP:rs34214571.">
    <original>N</original>
    <variation>S</variation>
    <location>
        <position position="629"/>
    </location>
</feature>
<feature type="sequence variant" id="VAR_068501" description="In NPHP14; found at homozygosity in two siblings with nephronophthisis, cerebellar vermis hypoplasia and situs inversus; dbSNP:rs200585917." evidence="5">
    <original>P</original>
    <variation>L</variation>
    <location>
        <position position="913"/>
    </location>
</feature>
<feature type="sequence variant" id="VAR_068502" description="In JBTS19; dbSNP:rs1596988259." evidence="5">
    <original>H</original>
    <variation>Y</variation>
    <location>
        <position position="1277"/>
    </location>
</feature>
<feature type="mutagenesis site" description="Abolishes the ability to bind promoter of BMP target genes; when associated with A-426; A-452; A-458; A-491; A-497; A-528; A-534; A-574 and A-581." evidence="4">
    <original>N</original>
    <variation>A</variation>
    <location>
        <position position="420"/>
    </location>
</feature>
<feature type="mutagenesis site" description="Abolishes the ability to bind promoter of BMP target genes; when associated with A-420; A-452; A-458; A-491; A-497; A-528; A-534; A-574 and A-581." evidence="4">
    <original>E</original>
    <variation>A</variation>
    <location>
        <position position="426"/>
    </location>
</feature>
<feature type="mutagenesis site" description="Abolishes the ability to bind promoter of BMP target genes; when associated with A-420; A-426; A-458; A-491; A-497; A-528; A-534; A-574 and A-581." evidence="4">
    <original>T</original>
    <variation>A</variation>
    <location>
        <position position="452"/>
    </location>
</feature>
<feature type="mutagenesis site" description="Abolishes the ability to bind promoter of BMP target genes; when associated with A-420; A-426; A-452; A-491; A-497; A-528; A-534; A-574 and A-581." evidence="4">
    <original>E</original>
    <variation>A</variation>
    <location>
        <position position="458"/>
    </location>
</feature>
<feature type="mutagenesis site" description="Abolishes the ability to bind promoter of BMP target genes; when associated with A-420; A-426; A-452; A-458; A-497; A-528; A-534; A-574 and A-581." evidence="4">
    <original>D</original>
    <variation>A</variation>
    <location>
        <position position="491"/>
    </location>
</feature>
<feature type="mutagenesis site" description="Abolishes the ability to bind promoter of BMP target genes; when associated with A-420; A-426; A-452; A-458; A-491; A-528; A-534; A-574 and A-581." evidence="4">
    <original>E</original>
    <variation>A</variation>
    <location>
        <position position="497"/>
    </location>
</feature>
<feature type="mutagenesis site" description="Abolishes the ability to bind promoter of BMP target genes; when associated with A-420; A-426; A-452; A-458; A-491; A-497; A-534; A-574 and A-581." evidence="4">
    <original>T</original>
    <variation>A</variation>
    <location>
        <position position="528"/>
    </location>
</feature>
<feature type="mutagenesis site" description="Abolishes the ability to bind promoter of BMP target genes; when associated with A-420; A-426; A-452; A-458; A-491; A-497; A-528; A-574 and A-581." evidence="4">
    <original>E</original>
    <variation>A</variation>
    <location>
        <position position="534"/>
    </location>
</feature>
<feature type="mutagenesis site" description="Abolishes the ability to bind promoter of BMP target genes; when associated with A-420; A-426; A-452; A-458; A-491; A-497; A-528; A-534 and A-581." evidence="4">
    <original>F</original>
    <variation>A</variation>
    <location>
        <position position="574"/>
    </location>
</feature>
<feature type="mutagenesis site" description="Abolishes the ability to bind promoter of BMP target genes; when associated with A-420; A-426; A-452; A-458; A-491; A-497; A-528; A-534 and A-574." evidence="4">
    <original>T</original>
    <variation>A</variation>
    <location>
        <position position="581"/>
    </location>
</feature>
<feature type="strand" evidence="8">
    <location>
        <begin position="933"/>
        <end position="937"/>
    </location>
</feature>
<feature type="helix" evidence="8">
    <location>
        <begin position="942"/>
        <end position="949"/>
    </location>
</feature>
<feature type="helix" evidence="8">
    <location>
        <begin position="950"/>
        <end position="952"/>
    </location>
</feature>
<feature type="strand" evidence="8">
    <location>
        <begin position="958"/>
        <end position="960"/>
    </location>
</feature>
<feature type="strand" evidence="8">
    <location>
        <begin position="962"/>
        <end position="964"/>
    </location>
</feature>
<feature type="strand" evidence="8">
    <location>
        <begin position="967"/>
        <end position="970"/>
    </location>
</feature>
<feature type="helix" evidence="8">
    <location>
        <begin position="973"/>
        <end position="979"/>
    </location>
</feature>
<accession>Q2M1K9</accession>
<accession>O94860</accession>
<accession>Q76N04</accession>
<accession>Q9NZ13</accession>
<keyword id="KW-0002">3D-structure</keyword>
<keyword id="KW-0010">Activator</keyword>
<keyword id="KW-0025">Alternative splicing</keyword>
<keyword id="KW-1186">Ciliopathy</keyword>
<keyword id="KW-0217">Developmental protein</keyword>
<keyword id="KW-0221">Differentiation</keyword>
<keyword id="KW-0225">Disease variant</keyword>
<keyword id="KW-0238">DNA-binding</keyword>
<keyword id="KW-0979">Joubert syndrome</keyword>
<keyword id="KW-0479">Metal-binding</keyword>
<keyword id="KW-0983">Nephronophthisis</keyword>
<keyword id="KW-0524">Neurogenesis</keyword>
<keyword id="KW-0539">Nucleus</keyword>
<keyword id="KW-0597">Phosphoprotein</keyword>
<keyword id="KW-1267">Proteomics identification</keyword>
<keyword id="KW-1185">Reference proteome</keyword>
<keyword id="KW-0677">Repeat</keyword>
<keyword id="KW-0678">Repressor</keyword>
<keyword id="KW-0804">Transcription</keyword>
<keyword id="KW-0805">Transcription regulation</keyword>
<keyword id="KW-0862">Zinc</keyword>
<keyword id="KW-0863">Zinc-finger</keyword>
<organism>
    <name type="scientific">Homo sapiens</name>
    <name type="common">Human</name>
    <dbReference type="NCBI Taxonomy" id="9606"/>
    <lineage>
        <taxon>Eukaryota</taxon>
        <taxon>Metazoa</taxon>
        <taxon>Chordata</taxon>
        <taxon>Craniata</taxon>
        <taxon>Vertebrata</taxon>
        <taxon>Euteleostomi</taxon>
        <taxon>Mammalia</taxon>
        <taxon>Eutheria</taxon>
        <taxon>Euarchontoglires</taxon>
        <taxon>Primates</taxon>
        <taxon>Haplorrhini</taxon>
        <taxon>Catarrhini</taxon>
        <taxon>Hominidae</taxon>
        <taxon>Homo</taxon>
    </lineage>
</organism>
<dbReference type="EMBL" id="BC112315">
    <property type="protein sequence ID" value="AAI12316.1"/>
    <property type="molecule type" value="mRNA"/>
</dbReference>
<dbReference type="EMBL" id="BC112317">
    <property type="protein sequence ID" value="AAI12318.1"/>
    <property type="molecule type" value="mRNA"/>
</dbReference>
<dbReference type="EMBL" id="AF221712">
    <property type="protein sequence ID" value="AAF28354.1"/>
    <property type="molecule type" value="mRNA"/>
</dbReference>
<dbReference type="EMBL" id="AB018303">
    <property type="protein sequence ID" value="BAA34480.2"/>
    <property type="molecule type" value="mRNA"/>
</dbReference>
<dbReference type="CCDS" id="CCDS32445.1">
    <molecule id="Q2M1K9-1"/>
</dbReference>
<dbReference type="CCDS" id="CCDS61930.1">
    <molecule id="Q2M1K9-2"/>
</dbReference>
<dbReference type="RefSeq" id="NP_001258549.1">
    <molecule id="Q2M1K9-2"/>
    <property type="nucleotide sequence ID" value="NM_001271620.2"/>
</dbReference>
<dbReference type="RefSeq" id="NP_055884.2">
    <molecule id="Q2M1K9-1"/>
    <property type="nucleotide sequence ID" value="NM_015069.4"/>
</dbReference>
<dbReference type="RefSeq" id="XP_005255913.1">
    <molecule id="Q2M1K9-2"/>
    <property type="nucleotide sequence ID" value="XM_005255856.5"/>
</dbReference>
<dbReference type="RefSeq" id="XP_016878566.1">
    <property type="nucleotide sequence ID" value="XM_017023077.1"/>
</dbReference>
<dbReference type="RefSeq" id="XP_016878567.1">
    <molecule id="Q2M1K9-2"/>
    <property type="nucleotide sequence ID" value="XM_017023078.2"/>
</dbReference>
<dbReference type="RefSeq" id="XP_047289765.1">
    <molecule id="Q2M1K9-2"/>
    <property type="nucleotide sequence ID" value="XM_047433809.1"/>
</dbReference>
<dbReference type="RefSeq" id="XP_054235835.1">
    <molecule id="Q2M1K9-2"/>
    <property type="nucleotide sequence ID" value="XM_054379860.1"/>
</dbReference>
<dbReference type="RefSeq" id="XP_054235836.1">
    <molecule id="Q2M1K9-2"/>
    <property type="nucleotide sequence ID" value="XM_054379861.1"/>
</dbReference>
<dbReference type="RefSeq" id="XP_054235837.1">
    <molecule id="Q2M1K9-2"/>
    <property type="nucleotide sequence ID" value="XM_054379862.1"/>
</dbReference>
<dbReference type="PDB" id="2MDG">
    <property type="method" value="NMR"/>
    <property type="chains" value="A=928-981"/>
</dbReference>
<dbReference type="PDBsum" id="2MDG"/>
<dbReference type="BMRB" id="Q2M1K9"/>
<dbReference type="SMR" id="Q2M1K9"/>
<dbReference type="BioGRID" id="116718">
    <property type="interactions" value="37"/>
</dbReference>
<dbReference type="FunCoup" id="Q2M1K9">
    <property type="interactions" value="2148"/>
</dbReference>
<dbReference type="IntAct" id="Q2M1K9">
    <property type="interactions" value="32"/>
</dbReference>
<dbReference type="MINT" id="Q2M1K9"/>
<dbReference type="STRING" id="9606.ENSP00000455426"/>
<dbReference type="GlyGen" id="Q2M1K9">
    <property type="glycosylation" value="2 sites, 1 O-linked glycan (1 site)"/>
</dbReference>
<dbReference type="iPTMnet" id="Q2M1K9"/>
<dbReference type="PhosphoSitePlus" id="Q2M1K9"/>
<dbReference type="BioMuta" id="ZNF423"/>
<dbReference type="DMDM" id="121941357"/>
<dbReference type="jPOST" id="Q2M1K9"/>
<dbReference type="MassIVE" id="Q2M1K9"/>
<dbReference type="PaxDb" id="9606-ENSP00000455426"/>
<dbReference type="PeptideAtlas" id="Q2M1K9"/>
<dbReference type="ProteomicsDB" id="61340"/>
<dbReference type="ABCD" id="Q2M1K9">
    <property type="antibodies" value="1 sequenced antibody"/>
</dbReference>
<dbReference type="Antibodypedia" id="28187">
    <property type="antibodies" value="107 antibodies from 27 providers"/>
</dbReference>
<dbReference type="DNASU" id="23090"/>
<dbReference type="Ensembl" id="ENST00000561648.5">
    <molecule id="Q2M1K9-1"/>
    <property type="protein sequence ID" value="ENSP00000455426.1"/>
    <property type="gene ID" value="ENSG00000102935.12"/>
</dbReference>
<dbReference type="Ensembl" id="ENST00000562520.1">
    <molecule id="Q2M1K9-2"/>
    <property type="protein sequence ID" value="ENSP00000457664.1"/>
    <property type="gene ID" value="ENSG00000102935.12"/>
</dbReference>
<dbReference type="Ensembl" id="ENST00000562871.5">
    <molecule id="Q2M1K9-2"/>
    <property type="protein sequence ID" value="ENSP00000457928.1"/>
    <property type="gene ID" value="ENSG00000102935.12"/>
</dbReference>
<dbReference type="GeneID" id="23090"/>
<dbReference type="KEGG" id="hsa:23090"/>
<dbReference type="UCSC" id="uc031qwd.2">
    <molecule id="Q2M1K9-1"/>
    <property type="organism name" value="human"/>
</dbReference>
<dbReference type="AGR" id="HGNC:16762"/>
<dbReference type="CTD" id="23090"/>
<dbReference type="DisGeNET" id="23090"/>
<dbReference type="GeneCards" id="ZNF423"/>
<dbReference type="GeneReviews" id="ZNF423"/>
<dbReference type="HGNC" id="HGNC:16762">
    <property type="gene designation" value="ZNF423"/>
</dbReference>
<dbReference type="HPA" id="ENSG00000102935">
    <property type="expression patterns" value="Tissue enhanced (skeletal)"/>
</dbReference>
<dbReference type="MalaCards" id="ZNF423"/>
<dbReference type="MIM" id="604557">
    <property type="type" value="gene"/>
</dbReference>
<dbReference type="MIM" id="614844">
    <property type="type" value="phenotype"/>
</dbReference>
<dbReference type="neXtProt" id="NX_Q2M1K9"/>
<dbReference type="OpenTargets" id="ENSG00000102935"/>
<dbReference type="Orphanet" id="93591">
    <property type="disease" value="Infantile nephronophthisis"/>
</dbReference>
<dbReference type="Orphanet" id="2318">
    <property type="disease" value="Joubert syndrome with oculorenal defect"/>
</dbReference>
<dbReference type="PharmGKB" id="PA134903681"/>
<dbReference type="VEuPathDB" id="HostDB:ENSG00000102935"/>
<dbReference type="eggNOG" id="KOG1721">
    <property type="taxonomic scope" value="Eukaryota"/>
</dbReference>
<dbReference type="GeneTree" id="ENSGT00940000158492"/>
<dbReference type="InParanoid" id="Q2M1K9"/>
<dbReference type="OrthoDB" id="10014897at2759"/>
<dbReference type="PAN-GO" id="Q2M1K9">
    <property type="GO annotations" value="3 GO annotations based on evolutionary models"/>
</dbReference>
<dbReference type="PhylomeDB" id="Q2M1K9"/>
<dbReference type="TreeFam" id="TF331504"/>
<dbReference type="PathwayCommons" id="Q2M1K9"/>
<dbReference type="Reactome" id="R-HSA-9844594">
    <property type="pathway name" value="Transcriptional regulation of brown and beige adipocyte differentiation by EBF2"/>
</dbReference>
<dbReference type="SignaLink" id="Q2M1K9"/>
<dbReference type="SIGNOR" id="Q2M1K9"/>
<dbReference type="BioGRID-ORCS" id="23090">
    <property type="hits" value="15 hits in 1176 CRISPR screens"/>
</dbReference>
<dbReference type="ChiTaRS" id="ZNF423">
    <property type="organism name" value="human"/>
</dbReference>
<dbReference type="EvolutionaryTrace" id="Q2M1K9"/>
<dbReference type="GeneWiki" id="ZNF423"/>
<dbReference type="GenomeRNAi" id="23090"/>
<dbReference type="Pharos" id="Q2M1K9">
    <property type="development level" value="Tbio"/>
</dbReference>
<dbReference type="PRO" id="PR:Q2M1K9"/>
<dbReference type="Proteomes" id="UP000005640">
    <property type="component" value="Chromosome 16"/>
</dbReference>
<dbReference type="RNAct" id="Q2M1K9">
    <property type="molecule type" value="protein"/>
</dbReference>
<dbReference type="Bgee" id="ENSG00000102935">
    <property type="expression patterns" value="Expressed in skeletal muscle tissue of biceps brachii and 175 other cell types or tissues"/>
</dbReference>
<dbReference type="ExpressionAtlas" id="Q2M1K9">
    <property type="expression patterns" value="baseline and differential"/>
</dbReference>
<dbReference type="GO" id="GO:0005654">
    <property type="term" value="C:nucleoplasm"/>
    <property type="evidence" value="ECO:0000314"/>
    <property type="project" value="HPA"/>
</dbReference>
<dbReference type="GO" id="GO:0005634">
    <property type="term" value="C:nucleus"/>
    <property type="evidence" value="ECO:0000314"/>
    <property type="project" value="UniProtKB"/>
</dbReference>
<dbReference type="GO" id="GO:0000981">
    <property type="term" value="F:DNA-binding transcription factor activity, RNA polymerase II-specific"/>
    <property type="evidence" value="ECO:0000318"/>
    <property type="project" value="GO_Central"/>
</dbReference>
<dbReference type="GO" id="GO:0000978">
    <property type="term" value="F:RNA polymerase II cis-regulatory region sequence-specific DNA binding"/>
    <property type="evidence" value="ECO:0000318"/>
    <property type="project" value="GO_Central"/>
</dbReference>
<dbReference type="GO" id="GO:0043565">
    <property type="term" value="F:sequence-specific DNA binding"/>
    <property type="evidence" value="ECO:0000315"/>
    <property type="project" value="MGI"/>
</dbReference>
<dbReference type="GO" id="GO:0008270">
    <property type="term" value="F:zinc ion binding"/>
    <property type="evidence" value="ECO:0007669"/>
    <property type="project" value="UniProtKB-KW"/>
</dbReference>
<dbReference type="GO" id="GO:0030154">
    <property type="term" value="P:cell differentiation"/>
    <property type="evidence" value="ECO:0007669"/>
    <property type="project" value="UniProtKB-KW"/>
</dbReference>
<dbReference type="GO" id="GO:0120163">
    <property type="term" value="P:negative regulation of cold-induced thermogenesis"/>
    <property type="evidence" value="ECO:0000250"/>
    <property type="project" value="YuBioLab"/>
</dbReference>
<dbReference type="GO" id="GO:0045892">
    <property type="term" value="P:negative regulation of DNA-templated transcription"/>
    <property type="evidence" value="ECO:0000314"/>
    <property type="project" value="UniProtKB"/>
</dbReference>
<dbReference type="GO" id="GO:0007399">
    <property type="term" value="P:nervous system development"/>
    <property type="evidence" value="ECO:0007669"/>
    <property type="project" value="UniProtKB-KW"/>
</dbReference>
<dbReference type="GO" id="GO:0007219">
    <property type="term" value="P:Notch signaling pathway"/>
    <property type="evidence" value="ECO:0000250"/>
    <property type="project" value="UniProtKB"/>
</dbReference>
<dbReference type="GO" id="GO:0030513">
    <property type="term" value="P:positive regulation of BMP signaling pathway"/>
    <property type="evidence" value="ECO:0000250"/>
    <property type="project" value="UniProtKB"/>
</dbReference>
<dbReference type="GO" id="GO:0045893">
    <property type="term" value="P:positive regulation of DNA-templated transcription"/>
    <property type="evidence" value="ECO:0000314"/>
    <property type="project" value="UniProtKB"/>
</dbReference>
<dbReference type="GO" id="GO:0061512">
    <property type="term" value="P:protein localization to cilium"/>
    <property type="evidence" value="ECO:0000315"/>
    <property type="project" value="MGI"/>
</dbReference>
<dbReference type="GO" id="GO:0006355">
    <property type="term" value="P:regulation of DNA-templated transcription"/>
    <property type="evidence" value="ECO:0000318"/>
    <property type="project" value="GO_Central"/>
</dbReference>
<dbReference type="FunFam" id="3.30.160.60:FF:000468">
    <property type="entry name" value="B-cell lymphoma 6 protein-like"/>
    <property type="match status" value="1"/>
</dbReference>
<dbReference type="FunFam" id="3.30.160.60:FF:000469">
    <property type="entry name" value="Zinc finger protein 423"/>
    <property type="match status" value="1"/>
</dbReference>
<dbReference type="FunFam" id="3.30.160.60:FF:000483">
    <property type="entry name" value="Zinc finger protein 423"/>
    <property type="match status" value="1"/>
</dbReference>
<dbReference type="FunFam" id="3.30.160.60:FF:000548">
    <property type="entry name" value="Zinc finger protein 423"/>
    <property type="match status" value="1"/>
</dbReference>
<dbReference type="FunFam" id="3.30.160.60:FF:000760">
    <property type="entry name" value="Zinc finger protein 423"/>
    <property type="match status" value="1"/>
</dbReference>
<dbReference type="FunFam" id="3.30.160.60:FF:004063">
    <property type="entry name" value="Zinc finger protein 423"/>
    <property type="match status" value="1"/>
</dbReference>
<dbReference type="FunFam" id="3.30.160.60:FF:000244">
    <property type="entry name" value="zinc finger protein 423"/>
    <property type="match status" value="1"/>
</dbReference>
<dbReference type="FunFam" id="3.30.160.60:FF:001417">
    <property type="entry name" value="zinc finger protein 423"/>
    <property type="match status" value="1"/>
</dbReference>
<dbReference type="FunFam" id="3.30.160.60:FF:002384">
    <property type="entry name" value="zinc finger protein 423"/>
    <property type="match status" value="1"/>
</dbReference>
<dbReference type="FunFam" id="3.30.160.60:FF:000143">
    <property type="entry name" value="Zinc finger protein 521"/>
    <property type="match status" value="1"/>
</dbReference>
<dbReference type="FunFam" id="3.30.160.60:FF:000167">
    <property type="entry name" value="Zinc finger protein 521"/>
    <property type="match status" value="1"/>
</dbReference>
<dbReference type="FunFam" id="3.30.160.60:FF:000261">
    <property type="entry name" value="Zinc finger protein 521"/>
    <property type="match status" value="1"/>
</dbReference>
<dbReference type="Gene3D" id="3.30.160.60">
    <property type="entry name" value="Classic Zinc Finger"/>
    <property type="match status" value="13"/>
</dbReference>
<dbReference type="InterPro" id="IPR036236">
    <property type="entry name" value="Znf_C2H2_sf"/>
</dbReference>
<dbReference type="InterPro" id="IPR013087">
    <property type="entry name" value="Znf_C2H2_type"/>
</dbReference>
<dbReference type="PANTHER" id="PTHR24379:SF121">
    <property type="entry name" value="C2H2-TYPE DOMAIN-CONTAINING PROTEIN"/>
    <property type="match status" value="1"/>
</dbReference>
<dbReference type="PANTHER" id="PTHR24379">
    <property type="entry name" value="KRAB AND ZINC FINGER DOMAIN-CONTAINING"/>
    <property type="match status" value="1"/>
</dbReference>
<dbReference type="Pfam" id="PF00096">
    <property type="entry name" value="zf-C2H2"/>
    <property type="match status" value="7"/>
</dbReference>
<dbReference type="Pfam" id="PF13912">
    <property type="entry name" value="zf-C2H2_6"/>
    <property type="match status" value="2"/>
</dbReference>
<dbReference type="SMART" id="SM00355">
    <property type="entry name" value="ZnF_C2H2"/>
    <property type="match status" value="30"/>
</dbReference>
<dbReference type="SUPFAM" id="SSF57667">
    <property type="entry name" value="beta-beta-alpha zinc fingers"/>
    <property type="match status" value="9"/>
</dbReference>
<dbReference type="PROSITE" id="PS00028">
    <property type="entry name" value="ZINC_FINGER_C2H2_1"/>
    <property type="match status" value="27"/>
</dbReference>
<dbReference type="PROSITE" id="PS50157">
    <property type="entry name" value="ZINC_FINGER_C2H2_2"/>
    <property type="match status" value="23"/>
</dbReference>
<gene>
    <name type="primary">ZNF423</name>
    <name type="synonym">KIAA0760</name>
    <name type="synonym">NPHP14</name>
    <name type="synonym">OAZ</name>
</gene>